<sequence length="440" mass="50579">MSEFSQTVPELVAWARKNDFSISLPVDRLSFLLAVATLNGERLDGEMSEGELVDAFRHVSDAFEQTSETIGVRANNAINDMVRQRLLNRFTSEQAEGNAIYRLTPLGIGITDYYIRQREFSTLRLSMQLSIVAGELKRAADAAEEGGDEFHWHRNVYAPLKYSVAEIFDSIDLTQRLMDEQQQQVKDDIAQLLNKDWRAAISSCELLLSETSGTLRELQDTLEAAGDKLQANLLRIQDATMTHDDLHFVDRLVFDLQSKLDRIISWGQQSIDLWIGYDRHVHKFIRTAIDMDKNRVFAQRLRQSVQTYFDEPWALTYANADRLLDMRDEEMALRDEEVTGELPEDLEYEEFNEIREQLAAIIEEQLAVYKTRQVPLDLGLVVREYLSQYPRARHFDVARIVIDQAVRLGVAQADFTGLPAKWQPINDYGAKVQAHVIDKY</sequence>
<keyword id="KW-0106">Calcium</keyword>
<keyword id="KW-0131">Cell cycle</keyword>
<keyword id="KW-0132">Cell division</keyword>
<keyword id="KW-0159">Chromosome partition</keyword>
<keyword id="KW-0963">Cytoplasm</keyword>
<keyword id="KW-0226">DNA condensation</keyword>
<dbReference type="EMBL" id="CP000970">
    <property type="protein sequence ID" value="ACB15563.1"/>
    <property type="molecule type" value="Genomic_DNA"/>
</dbReference>
<dbReference type="RefSeq" id="WP_001288850.1">
    <property type="nucleotide sequence ID" value="NC_010498.1"/>
</dbReference>
<dbReference type="SMR" id="B1LJU1"/>
<dbReference type="GeneID" id="93776493"/>
<dbReference type="KEGG" id="ecm:EcSMS35_2198"/>
<dbReference type="HOGENOM" id="CLU_049853_0_0_6"/>
<dbReference type="Proteomes" id="UP000007011">
    <property type="component" value="Chromosome"/>
</dbReference>
<dbReference type="GO" id="GO:0005737">
    <property type="term" value="C:cytoplasm"/>
    <property type="evidence" value="ECO:0007669"/>
    <property type="project" value="UniProtKB-UniRule"/>
</dbReference>
<dbReference type="GO" id="GO:0009295">
    <property type="term" value="C:nucleoid"/>
    <property type="evidence" value="ECO:0007669"/>
    <property type="project" value="UniProtKB-SubCell"/>
</dbReference>
<dbReference type="GO" id="GO:0005509">
    <property type="term" value="F:calcium ion binding"/>
    <property type="evidence" value="ECO:0007669"/>
    <property type="project" value="UniProtKB-UniRule"/>
</dbReference>
<dbReference type="GO" id="GO:0051301">
    <property type="term" value="P:cell division"/>
    <property type="evidence" value="ECO:0007669"/>
    <property type="project" value="UniProtKB-KW"/>
</dbReference>
<dbReference type="GO" id="GO:0030261">
    <property type="term" value="P:chromosome condensation"/>
    <property type="evidence" value="ECO:0007669"/>
    <property type="project" value="UniProtKB-KW"/>
</dbReference>
<dbReference type="GO" id="GO:0007059">
    <property type="term" value="P:chromosome segregation"/>
    <property type="evidence" value="ECO:0007669"/>
    <property type="project" value="UniProtKB-UniRule"/>
</dbReference>
<dbReference type="GO" id="GO:0006260">
    <property type="term" value="P:DNA replication"/>
    <property type="evidence" value="ECO:0007669"/>
    <property type="project" value="UniProtKB-UniRule"/>
</dbReference>
<dbReference type="CDD" id="cd16337">
    <property type="entry name" value="MukF_C"/>
    <property type="match status" value="1"/>
</dbReference>
<dbReference type="CDD" id="cd16335">
    <property type="entry name" value="MukF_N"/>
    <property type="match status" value="1"/>
</dbReference>
<dbReference type="Gene3D" id="1.20.58.590">
    <property type="entry name" value="Chromosome partition protein MukF, middle domain"/>
    <property type="match status" value="1"/>
</dbReference>
<dbReference type="Gene3D" id="1.10.225.40">
    <property type="entry name" value="MukF, C-terminal domain"/>
    <property type="match status" value="1"/>
</dbReference>
<dbReference type="Gene3D" id="1.10.10.10">
    <property type="entry name" value="Winged helix-like DNA-binding domain superfamily/Winged helix DNA-binding domain"/>
    <property type="match status" value="1"/>
</dbReference>
<dbReference type="HAMAP" id="MF_01803">
    <property type="entry name" value="MukF"/>
    <property type="match status" value="1"/>
</dbReference>
<dbReference type="InterPro" id="IPR005582">
    <property type="entry name" value="Chromosome_partition_MukF"/>
</dbReference>
<dbReference type="InterPro" id="IPR033441">
    <property type="entry name" value="MukF_C"/>
</dbReference>
<dbReference type="InterPro" id="IPR038198">
    <property type="entry name" value="MukF_C_sf"/>
</dbReference>
<dbReference type="InterPro" id="IPR033440">
    <property type="entry name" value="MukF_M"/>
</dbReference>
<dbReference type="InterPro" id="IPR036141">
    <property type="entry name" value="MukF_M_sp"/>
</dbReference>
<dbReference type="InterPro" id="IPR033439">
    <property type="entry name" value="MukF_WHTH"/>
</dbReference>
<dbReference type="InterPro" id="IPR036388">
    <property type="entry name" value="WH-like_DNA-bd_sf"/>
</dbReference>
<dbReference type="InterPro" id="IPR036390">
    <property type="entry name" value="WH_DNA-bd_sf"/>
</dbReference>
<dbReference type="NCBIfam" id="NF003615">
    <property type="entry name" value="PRK05260.1"/>
    <property type="match status" value="1"/>
</dbReference>
<dbReference type="Pfam" id="PF03882">
    <property type="entry name" value="KicB"/>
    <property type="match status" value="1"/>
</dbReference>
<dbReference type="Pfam" id="PF17193">
    <property type="entry name" value="MukF_C"/>
    <property type="match status" value="1"/>
</dbReference>
<dbReference type="Pfam" id="PF17192">
    <property type="entry name" value="MukF_M"/>
    <property type="match status" value="1"/>
</dbReference>
<dbReference type="PIRSF" id="PIRSF018282">
    <property type="entry name" value="MukF"/>
    <property type="match status" value="1"/>
</dbReference>
<dbReference type="SUPFAM" id="SSF140570">
    <property type="entry name" value="MukF C-terminal domain-like"/>
    <property type="match status" value="1"/>
</dbReference>
<dbReference type="SUPFAM" id="SSF46785">
    <property type="entry name" value="Winged helix' DNA-binding domain"/>
    <property type="match status" value="1"/>
</dbReference>
<organism>
    <name type="scientific">Escherichia coli (strain SMS-3-5 / SECEC)</name>
    <dbReference type="NCBI Taxonomy" id="439855"/>
    <lineage>
        <taxon>Bacteria</taxon>
        <taxon>Pseudomonadati</taxon>
        <taxon>Pseudomonadota</taxon>
        <taxon>Gammaproteobacteria</taxon>
        <taxon>Enterobacterales</taxon>
        <taxon>Enterobacteriaceae</taxon>
        <taxon>Escherichia</taxon>
    </lineage>
</organism>
<accession>B1LJU1</accession>
<protein>
    <recommendedName>
        <fullName evidence="1">Chromosome partition protein MukF</fullName>
    </recommendedName>
</protein>
<comment type="function">
    <text evidence="1">Involved in chromosome condensation, segregation and cell cycle progression. May participate in facilitating chromosome segregation by condensation DNA from both sides of a centrally located replisome during cell division. Not required for mini-F plasmid partitioning. Probably acts via its interaction with MukB and MukE. Overexpression results in anucleate cells. It has a calcium binding activity.</text>
</comment>
<comment type="subunit">
    <text evidence="1">Interacts, and probably forms a ternary complex, with MukE and MukB via its C-terminal region. The complex formation is stimulated by calcium or magnesium. It is required for an interaction between MukE and MukB.</text>
</comment>
<comment type="subcellular location">
    <subcellularLocation>
        <location evidence="1">Cytoplasm</location>
        <location evidence="1">Nucleoid</location>
    </subcellularLocation>
    <text evidence="1">Restricted to the nucleoid region.</text>
</comment>
<comment type="similarity">
    <text evidence="1">Belongs to the MukF family.</text>
</comment>
<proteinExistence type="inferred from homology"/>
<name>MUKF_ECOSM</name>
<feature type="chain" id="PRO_1000187508" description="Chromosome partition protein MukF">
    <location>
        <begin position="1"/>
        <end position="440"/>
    </location>
</feature>
<feature type="region of interest" description="Leucine-zipper">
    <location>
        <begin position="208"/>
        <end position="236"/>
    </location>
</feature>
<reference key="1">
    <citation type="journal article" date="2008" name="J. Bacteriol.">
        <title>Insights into the environmental resistance gene pool from the genome sequence of the multidrug-resistant environmental isolate Escherichia coli SMS-3-5.</title>
        <authorList>
            <person name="Fricke W.F."/>
            <person name="Wright M.S."/>
            <person name="Lindell A.H."/>
            <person name="Harkins D.M."/>
            <person name="Baker-Austin C."/>
            <person name="Ravel J."/>
            <person name="Stepanauskas R."/>
        </authorList>
    </citation>
    <scope>NUCLEOTIDE SEQUENCE [LARGE SCALE GENOMIC DNA]</scope>
    <source>
        <strain>SMS-3-5 / SECEC</strain>
    </source>
</reference>
<gene>
    <name evidence="1" type="primary">mukF</name>
    <name type="ordered locus">EcSMS35_2198</name>
</gene>
<evidence type="ECO:0000255" key="1">
    <source>
        <dbReference type="HAMAP-Rule" id="MF_01803"/>
    </source>
</evidence>